<evidence type="ECO:0000250" key="1"/>
<evidence type="ECO:0000255" key="2"/>
<evidence type="ECO:0000256" key="3">
    <source>
        <dbReference type="SAM" id="MobiDB-lite"/>
    </source>
</evidence>
<evidence type="ECO:0000305" key="4"/>
<name>DAPB_ASPFN</name>
<gene>
    <name type="primary">dapB</name>
    <name type="ORF">AFLA_087160</name>
</gene>
<organism>
    <name type="scientific">Aspergillus flavus (strain ATCC 200026 / FGSC A1120 / IAM 13836 / NRRL 3357 / JCM 12722 / SRRC 167)</name>
    <dbReference type="NCBI Taxonomy" id="332952"/>
    <lineage>
        <taxon>Eukaryota</taxon>
        <taxon>Fungi</taxon>
        <taxon>Dikarya</taxon>
        <taxon>Ascomycota</taxon>
        <taxon>Pezizomycotina</taxon>
        <taxon>Eurotiomycetes</taxon>
        <taxon>Eurotiomycetidae</taxon>
        <taxon>Eurotiales</taxon>
        <taxon>Aspergillaceae</taxon>
        <taxon>Aspergillus</taxon>
        <taxon>Aspergillus subgen. Circumdati</taxon>
    </lineage>
</organism>
<protein>
    <recommendedName>
        <fullName>Probable dipeptidyl-aminopeptidase B</fullName>
        <shortName>DPAP B</shortName>
        <ecNumber>3.4.14.5</ecNumber>
    </recommendedName>
</protein>
<dbReference type="EC" id="3.4.14.5"/>
<dbReference type="EMBL" id="EQ963472">
    <property type="protein sequence ID" value="EED58018.1"/>
    <property type="molecule type" value="Genomic_DNA"/>
</dbReference>
<dbReference type="RefSeq" id="XP_002373630.1">
    <property type="nucleotide sequence ID" value="XM_002373589.1"/>
</dbReference>
<dbReference type="SMR" id="B8N076"/>
<dbReference type="STRING" id="332952.B8N076"/>
<dbReference type="ESTHER" id="aspor-q2upw4">
    <property type="family name" value="DPP4N_Peptidase_S9"/>
</dbReference>
<dbReference type="MEROPS" id="S09.006"/>
<dbReference type="GlyCosmos" id="B8N076">
    <property type="glycosylation" value="4 sites, No reported glycans"/>
</dbReference>
<dbReference type="EnsemblFungi" id="EED58018">
    <property type="protein sequence ID" value="EED58018"/>
    <property type="gene ID" value="AFLA_087160"/>
</dbReference>
<dbReference type="VEuPathDB" id="FungiDB:AFLA_004303"/>
<dbReference type="eggNOG" id="KOG2100">
    <property type="taxonomic scope" value="Eukaryota"/>
</dbReference>
<dbReference type="HOGENOM" id="CLU_006105_0_1_1"/>
<dbReference type="OMA" id="MRTPQEN"/>
<dbReference type="GO" id="GO:0000329">
    <property type="term" value="C:fungal-type vacuole membrane"/>
    <property type="evidence" value="ECO:0007669"/>
    <property type="project" value="EnsemblFungi"/>
</dbReference>
<dbReference type="GO" id="GO:0005886">
    <property type="term" value="C:plasma membrane"/>
    <property type="evidence" value="ECO:0007669"/>
    <property type="project" value="TreeGrafter"/>
</dbReference>
<dbReference type="GO" id="GO:0004177">
    <property type="term" value="F:aminopeptidase activity"/>
    <property type="evidence" value="ECO:0007669"/>
    <property type="project" value="UniProtKB-KW"/>
</dbReference>
<dbReference type="GO" id="GO:0008239">
    <property type="term" value="F:dipeptidyl-peptidase activity"/>
    <property type="evidence" value="ECO:0007669"/>
    <property type="project" value="UniProtKB-EC"/>
</dbReference>
<dbReference type="GO" id="GO:0008236">
    <property type="term" value="F:serine-type peptidase activity"/>
    <property type="evidence" value="ECO:0007669"/>
    <property type="project" value="UniProtKB-KW"/>
</dbReference>
<dbReference type="GO" id="GO:0006508">
    <property type="term" value="P:proteolysis"/>
    <property type="evidence" value="ECO:0007669"/>
    <property type="project" value="UniProtKB-KW"/>
</dbReference>
<dbReference type="FunFam" id="3.40.50.1820:FF:000003">
    <property type="entry name" value="Dipeptidyl peptidase 4"/>
    <property type="match status" value="1"/>
</dbReference>
<dbReference type="Gene3D" id="3.40.50.1820">
    <property type="entry name" value="alpha/beta hydrolase"/>
    <property type="match status" value="1"/>
</dbReference>
<dbReference type="Gene3D" id="2.140.10.30">
    <property type="entry name" value="Dipeptidylpeptidase IV, N-terminal domain"/>
    <property type="match status" value="1"/>
</dbReference>
<dbReference type="InterPro" id="IPR029058">
    <property type="entry name" value="AB_hydrolase_fold"/>
</dbReference>
<dbReference type="InterPro" id="IPR001375">
    <property type="entry name" value="Peptidase_S9_cat"/>
</dbReference>
<dbReference type="InterPro" id="IPR002469">
    <property type="entry name" value="Peptidase_S9B_N"/>
</dbReference>
<dbReference type="InterPro" id="IPR050278">
    <property type="entry name" value="Serine_Prot_S9B/DPPIV"/>
</dbReference>
<dbReference type="PANTHER" id="PTHR11731:SF200">
    <property type="entry name" value="DIPEPTIDYL PEPTIDASE 10, ISOFORM B"/>
    <property type="match status" value="1"/>
</dbReference>
<dbReference type="PANTHER" id="PTHR11731">
    <property type="entry name" value="PROTEASE FAMILY S9B,C DIPEPTIDYL-PEPTIDASE IV-RELATED"/>
    <property type="match status" value="1"/>
</dbReference>
<dbReference type="Pfam" id="PF00930">
    <property type="entry name" value="DPPIV_N"/>
    <property type="match status" value="1"/>
</dbReference>
<dbReference type="Pfam" id="PF00326">
    <property type="entry name" value="Peptidase_S9"/>
    <property type="match status" value="1"/>
</dbReference>
<dbReference type="SUPFAM" id="SSF53474">
    <property type="entry name" value="alpha/beta-Hydrolases"/>
    <property type="match status" value="1"/>
</dbReference>
<dbReference type="SUPFAM" id="SSF82171">
    <property type="entry name" value="DPP6 N-terminal domain-like"/>
    <property type="match status" value="1"/>
</dbReference>
<sequence>MGRTGDLENAEFFPMTRRRSTSGTSSRSSTDSGLSVDTAYLEDNKHNNFANGTSGLTDETKYRDVEDAEADVDEPFLPTSSKKLGSGSRTRQIFWALVILCLGGWVLALVLFLTHGRASSQTASETLQQQESDSGSTSAGRPVTLQQVLTGSWNPRAHAISWIAGPDGEDGLLVQRAEVDKEGYMRVDDIRSQEGDDVDSQSGRILIDKAAVRVNGETLMPTFTWPSPDLNKVLLMSNHEKNWRYSFTGRYWIFDVATQTAQPLDPSVPDGRVQLALWSPSSDAVVFVRDNNMYLRKLSSESVVSITKDGGEDLFYGIPDWVYEEEVITDKSVTWWSNDGKYVAFLRTNESAVPEFPVQYFVSRPSGKRPPPGLENYPEVRQIKYPKAGSPNPVVNLLFYDVEKDEVFPVDVPDDFPDDDRIIIEVLWASEGKVIVRATNRESDRVKVFLIDTKSRTGKLVRFEDIANLDGGWVEPSHYTKFIPADPSNGRPDDGYIDTVIHDGYDHLAYFTPLDNPDPIMLTTGEWEVVEAPSAVDLRRGIVYFVATKESPTQRHVYRVHLDGSNLQALTDTSKPGFYDVSFSDGAGYALLSYNGPSVPWQAIINTGGDEITFEKTIEKNPRLASMVETYALPTEIYQNVTIDGFTLQLVERRPPHFNPAKKYPVVFQLYNGPTSQRVDRKFTIDFQSYIASNLGYIVVTLDARGTGYSGRKVRCAVRGNLGHYEAHDQITTAKMWAKKPYVDETRMAIWGWSYGGFMTLKVLEQDAGETFQYGMAVAPVTDWRFYDSVYTERYMHTPEHNPSGYENSTITNVSALSKATRFLLIHGASDDNVHIQNTLTFVDKLDLLNVQNYDMHFYPDSDHNIYFHNAHFMIYERLSNWLINAFNGEWHQIANPVPEDSIWDSVKRSVPAFAH</sequence>
<proteinExistence type="inferred from homology"/>
<comment type="function">
    <text evidence="1">Type IV dipeptidyl-peptidase which removes N-terminal dipeptides sequentially from polypeptides having unsubstituted N-termini provided that the penultimate residue is proline.</text>
</comment>
<comment type="catalytic activity">
    <reaction>
        <text>Release of an N-terminal dipeptide, Xaa-Yaa-|-Zaa-, from a polypeptide, preferentially when Yaa is Pro, provided Zaa is neither Pro nor hydroxyproline.</text>
        <dbReference type="EC" id="3.4.14.5"/>
    </reaction>
</comment>
<comment type="subcellular location">
    <subcellularLocation>
        <location evidence="1">Vacuole membrane</location>
        <topology evidence="1">Single-pass type II membrane protein</topology>
    </subcellularLocation>
    <text evidence="1">Lysosome-like vacuoles.</text>
</comment>
<comment type="similarity">
    <text evidence="4">Belongs to the peptidase S9B family.</text>
</comment>
<accession>B8N076</accession>
<reference key="1">
    <citation type="journal article" date="2015" name="Genome Announc.">
        <title>Genome sequence of Aspergillus flavus NRRL 3357, a strain that causes aflatoxin contamination of food and feed.</title>
        <authorList>
            <person name="Nierman W.C."/>
            <person name="Yu J."/>
            <person name="Fedorova-Abrams N.D."/>
            <person name="Losada L."/>
            <person name="Cleveland T.E."/>
            <person name="Bhatnagar D."/>
            <person name="Bennett J.W."/>
            <person name="Dean R."/>
            <person name="Payne G.A."/>
        </authorList>
    </citation>
    <scope>NUCLEOTIDE SEQUENCE [LARGE SCALE GENOMIC DNA]</scope>
    <source>
        <strain>ATCC 200026 / FGSC A1120 / IAM 13836 / NRRL 3357 / JCM 12722 / SRRC 167</strain>
    </source>
</reference>
<keyword id="KW-0031">Aminopeptidase</keyword>
<keyword id="KW-0325">Glycoprotein</keyword>
<keyword id="KW-0378">Hydrolase</keyword>
<keyword id="KW-0472">Membrane</keyword>
<keyword id="KW-0645">Protease</keyword>
<keyword id="KW-0720">Serine protease</keyword>
<keyword id="KW-0735">Signal-anchor</keyword>
<keyword id="KW-0812">Transmembrane</keyword>
<keyword id="KW-1133">Transmembrane helix</keyword>
<keyword id="KW-0926">Vacuole</keyword>
<feature type="chain" id="PRO_0000412134" description="Probable dipeptidyl-aminopeptidase B">
    <location>
        <begin position="1"/>
        <end position="916"/>
    </location>
</feature>
<feature type="topological domain" description="Cytoplasmic" evidence="2">
    <location>
        <begin position="1"/>
        <end position="92"/>
    </location>
</feature>
<feature type="transmembrane region" description="Helical; Signal-anchor for type II membrane protein" evidence="2">
    <location>
        <begin position="93"/>
        <end position="113"/>
    </location>
</feature>
<feature type="topological domain" description="Vacuolar" evidence="2">
    <location>
        <begin position="114"/>
        <end position="916"/>
    </location>
</feature>
<feature type="region of interest" description="Disordered" evidence="3">
    <location>
        <begin position="1"/>
        <end position="35"/>
    </location>
</feature>
<feature type="region of interest" description="Disordered" evidence="3">
    <location>
        <begin position="67"/>
        <end position="86"/>
    </location>
</feature>
<feature type="compositionally biased region" description="Low complexity" evidence="3">
    <location>
        <begin position="21"/>
        <end position="35"/>
    </location>
</feature>
<feature type="active site" description="Charge relay system" evidence="1">
    <location>
        <position position="754"/>
    </location>
</feature>
<feature type="active site" description="Charge relay system" evidence="1">
    <location>
        <position position="831"/>
    </location>
</feature>
<feature type="active site" description="Charge relay system" evidence="1">
    <location>
        <position position="864"/>
    </location>
</feature>
<feature type="glycosylation site" description="N-linked (GlcNAc...) asparagine" evidence="2">
    <location>
        <position position="349"/>
    </location>
</feature>
<feature type="glycosylation site" description="N-linked (GlcNAc...) asparagine" evidence="2">
    <location>
        <position position="640"/>
    </location>
</feature>
<feature type="glycosylation site" description="N-linked (GlcNAc...) asparagine" evidence="2">
    <location>
        <position position="808"/>
    </location>
</feature>
<feature type="glycosylation site" description="N-linked (GlcNAc...) asparagine" evidence="2">
    <location>
        <position position="813"/>
    </location>
</feature>